<keyword id="KW-0328">Glycosyltransferase</keyword>
<keyword id="KW-0464">Manganese</keyword>
<keyword id="KW-0479">Metal-binding</keyword>
<keyword id="KW-1185">Reference proteome</keyword>
<keyword id="KW-0964">Secreted</keyword>
<keyword id="KW-0800">Toxin</keyword>
<keyword id="KW-0808">Transferase</keyword>
<keyword id="KW-0843">Virulence</keyword>
<organism>
    <name type="scientific">Escherichia coli O127:H6 (strain E2348/69 / EPEC)</name>
    <dbReference type="NCBI Taxonomy" id="574521"/>
    <lineage>
        <taxon>Bacteria</taxon>
        <taxon>Pseudomonadati</taxon>
        <taxon>Pseudomonadota</taxon>
        <taxon>Gammaproteobacteria</taxon>
        <taxon>Enterobacterales</taxon>
        <taxon>Enterobacteriaceae</taxon>
        <taxon>Escherichia</taxon>
    </lineage>
</organism>
<evidence type="ECO:0000250" key="1">
    <source>
        <dbReference type="UniProtKB" id="A0A482PDI9"/>
    </source>
</evidence>
<evidence type="ECO:0000250" key="2">
    <source>
        <dbReference type="UniProtKB" id="B7UI21"/>
    </source>
</evidence>
<evidence type="ECO:0000269" key="3">
    <source>
    </source>
</evidence>
<evidence type="ECO:0000269" key="4">
    <source>
    </source>
</evidence>
<evidence type="ECO:0000269" key="5">
    <source>
    </source>
</evidence>
<evidence type="ECO:0000303" key="6">
    <source>
    </source>
</evidence>
<evidence type="ECO:0000305" key="7"/>
<evidence type="ECO:0000312" key="8">
    <source>
        <dbReference type="EMBL" id="CAS08589.1"/>
    </source>
</evidence>
<sequence length="326" mass="38056">MLSPIRTTFHNSVNIVQSSPCQTVSFAGKEYELKVIDEKTPILFQWFEPNPERYKKDEVPIVNTKQHPYLDNVTNAARIESDRMIGIFVDGDFSVNQKTAFSKLERDFENVMIIYREDVDFSMYDRKLSDIYHDIICEQRLRTEDKRDEYLLNLLEKELREISKAQDSLISMYAKKRNHAWFDFFRNLALLKAGEIFRCTYNTKNHGISFGEGCIYLDMDMILTGKLGTIYAPDGISMHVDRRNDSVNIENSAIIVNRSNHPALLEGLSFMHSKVDAHPYYDGLGKGVKKYFNFTPLHNYNHFCDFIEFNHPNIIMNTSQYTCSSW</sequence>
<feature type="chain" id="PRO_0000452593" description="Protein-arginine N-acetylglucosaminyltransferase NleB2">
    <location>
        <begin position="1"/>
        <end position="326"/>
    </location>
</feature>
<feature type="short sequence motif" description="DXD motif" evidence="7">
    <location>
        <begin position="218"/>
        <end position="220"/>
    </location>
</feature>
<feature type="active site" description="Proton acceptor" evidence="2">
    <location>
        <position position="250"/>
    </location>
</feature>
<feature type="binding site" evidence="2">
    <location>
        <begin position="45"/>
        <end position="47"/>
    </location>
    <ligand>
        <name>UDP-N-acetyl-alpha-D-glucosamine</name>
        <dbReference type="ChEBI" id="CHEBI:57705"/>
    </ligand>
</feature>
<feature type="binding site" evidence="2">
    <location>
        <position position="69"/>
    </location>
    <ligand>
        <name>UDP-N-acetyl-alpha-D-glucosamine</name>
        <dbReference type="ChEBI" id="CHEBI:57705"/>
    </ligand>
</feature>
<feature type="binding site" evidence="2">
    <location>
        <begin position="216"/>
        <end position="219"/>
    </location>
    <ligand>
        <name>UDP-N-acetyl-alpha-D-glucosamine</name>
        <dbReference type="ChEBI" id="CHEBI:57705"/>
    </ligand>
</feature>
<feature type="binding site" evidence="2">
    <location>
        <position position="220"/>
    </location>
    <ligand>
        <name>Mn(2+)</name>
        <dbReference type="ChEBI" id="CHEBI:29035"/>
    </ligand>
</feature>
<feature type="binding site" evidence="2">
    <location>
        <position position="317"/>
    </location>
    <ligand>
        <name>Mn(2+)</name>
        <dbReference type="ChEBI" id="CHEBI:29035"/>
    </ligand>
</feature>
<feature type="binding site" evidence="2">
    <location>
        <position position="319"/>
    </location>
    <ligand>
        <name>Mn(2+)</name>
        <dbReference type="ChEBI" id="CHEBI:29035"/>
    </ligand>
</feature>
<feature type="binding site" evidence="2">
    <location>
        <position position="319"/>
    </location>
    <ligand>
        <name>UDP-N-acetyl-alpha-D-glucosamine</name>
        <dbReference type="ChEBI" id="CHEBI:57705"/>
    </ligand>
</feature>
<feature type="binding site" evidence="2">
    <location>
        <begin position="324"/>
        <end position="326"/>
    </location>
    <ligand>
        <name>UDP-N-acetyl-alpha-D-glucosamine</name>
        <dbReference type="ChEBI" id="CHEBI:57705"/>
    </ligand>
</feature>
<name>NLEB2_ECO27</name>
<proteinExistence type="evidence at protein level"/>
<comment type="function">
    <text evidence="3 4 5">Protein-arginine N-acetylglucosaminyltransferase effector that catalyzes the transfer of a single N-acetylglucosamine (GlcNAc) to a conserved arginine residue of host target proteins (PubMed:23955153). In contrast to NleB1, not able to disrupt TNF signaling in infected cells (PubMed:23955153, PubMed:24025841, PubMed:28522607). Shows a lower enzymatic activity than NleB1 (PubMed:23955153).</text>
</comment>
<comment type="catalytic activity">
    <reaction evidence="3">
        <text>L-arginyl-[protein] + UDP-N-acetyl-alpha-D-glucosamine = N(omega)-(N-acetyl-beta-D-glucosaminyl)-L-arginyl-[protein] + UDP + H(+)</text>
        <dbReference type="Rhea" id="RHEA:66632"/>
        <dbReference type="Rhea" id="RHEA-COMP:10532"/>
        <dbReference type="Rhea" id="RHEA-COMP:17079"/>
        <dbReference type="ChEBI" id="CHEBI:15378"/>
        <dbReference type="ChEBI" id="CHEBI:29965"/>
        <dbReference type="ChEBI" id="CHEBI:57705"/>
        <dbReference type="ChEBI" id="CHEBI:58223"/>
        <dbReference type="ChEBI" id="CHEBI:167322"/>
    </reaction>
    <physiologicalReaction direction="left-to-right" evidence="3">
        <dbReference type="Rhea" id="RHEA:66633"/>
    </physiologicalReaction>
</comment>
<comment type="cofactor">
    <cofactor evidence="2">
        <name>Mn(2+)</name>
        <dbReference type="ChEBI" id="CHEBI:29035"/>
    </cofactor>
</comment>
<comment type="subcellular location">
    <subcellularLocation>
        <location evidence="1">Secreted</location>
    </subcellularLocation>
    <subcellularLocation>
        <location evidence="1">Host cell</location>
    </subcellularLocation>
    <text evidence="1">Secreted via the type III secretion system (T3SS).</text>
</comment>
<comment type="domain">
    <text evidence="2">Adopts a GT-A fold and acts as an inverting enzyme that converts the alpha-configuration in the UDP-N-acetyl-alpha-D-glucosamine donor to the beta configuration in the N-linked (GlcNAc) arginine product.</text>
</comment>
<comment type="similarity">
    <text evidence="7">Belongs to the glycosyltransferase NleB family.</text>
</comment>
<reference key="1">
    <citation type="journal article" date="2009" name="J. Bacteriol.">
        <title>Complete genome sequence and comparative genome analysis of enteropathogenic Escherichia coli O127:H6 strain E2348/69.</title>
        <authorList>
            <person name="Iguchi A."/>
            <person name="Thomson N.R."/>
            <person name="Ogura Y."/>
            <person name="Saunders D."/>
            <person name="Ooka T."/>
            <person name="Henderson I.R."/>
            <person name="Harris D."/>
            <person name="Asadulghani M."/>
            <person name="Kurokawa K."/>
            <person name="Dean P."/>
            <person name="Kenny B."/>
            <person name="Quail M.A."/>
            <person name="Thurston S."/>
            <person name="Dougan G."/>
            <person name="Hayashi T."/>
            <person name="Parkhill J."/>
            <person name="Frankel G."/>
        </authorList>
    </citation>
    <scope>NUCLEOTIDE SEQUENCE [LARGE SCALE GENOMIC DNA]</scope>
    <source>
        <strain>E2348/69 / EPEC</strain>
    </source>
</reference>
<reference key="2">
    <citation type="journal article" date="2013" name="Nature">
        <title>Pathogen blocks host death receptor signalling by arginine GlcNAcylation of death domains.</title>
        <authorList>
            <person name="Li S."/>
            <person name="Zhang L."/>
            <person name="Yao Q."/>
            <person name="Li L."/>
            <person name="Dong N."/>
            <person name="Rong J."/>
            <person name="Gao W."/>
            <person name="Ding X."/>
            <person name="Sun L."/>
            <person name="Chen X."/>
            <person name="Chen S."/>
            <person name="Shao F."/>
        </authorList>
    </citation>
    <scope>FUNCTION</scope>
    <scope>CATALYTIC ACTIVITY</scope>
    <source>
        <strain>E2348/69 / EPEC</strain>
    </source>
</reference>
<reference key="3">
    <citation type="journal article" date="2013" name="Nature">
        <title>A type III effector antagonizes death receptor signalling during bacterial gut infection.</title>
        <authorList>
            <person name="Pearson J.S."/>
            <person name="Giogha C."/>
            <person name="Ong S.Y."/>
            <person name="Kennedy C.L."/>
            <person name="Kelly M."/>
            <person name="Robinson K.S."/>
            <person name="Lung T.W."/>
            <person name="Mansell A."/>
            <person name="Riedmaier P."/>
            <person name="Oates C.V."/>
            <person name="Zaid A."/>
            <person name="Muehlen S."/>
            <person name="Crepin V.F."/>
            <person name="Marches O."/>
            <person name="Ang C.S."/>
            <person name="Williamson N.A."/>
            <person name="O'Reilly L.A."/>
            <person name="Bankovacki A."/>
            <person name="Nachbur U."/>
            <person name="Infusini G."/>
            <person name="Webb A.I."/>
            <person name="Silke J."/>
            <person name="Strasser A."/>
            <person name="Frankel G."/>
            <person name="Hartland E.L."/>
        </authorList>
    </citation>
    <scope>FUNCTION</scope>
    <source>
        <strain>E2348/69 / EPEC</strain>
    </source>
</reference>
<reference key="4">
    <citation type="journal article" date="2017" name="J. Biol. Chem.">
        <title>NleB/SseK effectors from Citrobacter rodentium, Escherichia coli, and Salmonella enterica display distinct differences in host substrate specificity.</title>
        <authorList>
            <person name="El Qaidi S."/>
            <person name="Chen K."/>
            <person name="Halim A."/>
            <person name="Siukstaite L."/>
            <person name="Rueter C."/>
            <person name="Hurtado-Guerrero R."/>
            <person name="Clausen H."/>
            <person name="Hardwidge P.R."/>
        </authorList>
    </citation>
    <scope>FUNCTION</scope>
    <source>
        <strain>E2348/69 / EPEC</strain>
    </source>
</reference>
<gene>
    <name evidence="6" type="primary">nleB2</name>
    <name evidence="8" type="ordered locus">E2348C_1041</name>
</gene>
<protein>
    <recommendedName>
        <fullName evidence="7">Protein-arginine N-acetylglucosaminyltransferase NleB2</fullName>
        <shortName evidence="7">Arginine GlcNAcyltransferase NleB2</shortName>
        <ecNumber evidence="3">2.4.1.-</ecNumber>
    </recommendedName>
    <alternativeName>
        <fullName evidence="6">Non-LEE-encoded type III effector B2</fullName>
    </alternativeName>
</protein>
<dbReference type="EC" id="2.4.1.-" evidence="3"/>
<dbReference type="EMBL" id="FM180568">
    <property type="protein sequence ID" value="CAS08589.1"/>
    <property type="molecule type" value="Genomic_DNA"/>
</dbReference>
<dbReference type="RefSeq" id="WP_000950813.1">
    <property type="nucleotide sequence ID" value="NC_011601.1"/>
</dbReference>
<dbReference type="SMR" id="B7UNX3"/>
<dbReference type="DIP" id="DIP-60596N"/>
<dbReference type="IntAct" id="B7UNX3">
    <property type="interactions" value="1"/>
</dbReference>
<dbReference type="KEGG" id="ecg:E2348C_1041"/>
<dbReference type="HOGENOM" id="CLU_081850_0_0_6"/>
<dbReference type="Proteomes" id="UP000008205">
    <property type="component" value="Chromosome"/>
</dbReference>
<dbReference type="GO" id="GO:0005576">
    <property type="term" value="C:extracellular region"/>
    <property type="evidence" value="ECO:0007669"/>
    <property type="project" value="UniProtKB-SubCell"/>
</dbReference>
<dbReference type="GO" id="GO:0043657">
    <property type="term" value="C:host cell"/>
    <property type="evidence" value="ECO:0007669"/>
    <property type="project" value="UniProtKB-SubCell"/>
</dbReference>
<dbReference type="GO" id="GO:0016757">
    <property type="term" value="F:glycosyltransferase activity"/>
    <property type="evidence" value="ECO:0007669"/>
    <property type="project" value="UniProtKB-KW"/>
</dbReference>
<dbReference type="GO" id="GO:0046872">
    <property type="term" value="F:metal ion binding"/>
    <property type="evidence" value="ECO:0007669"/>
    <property type="project" value="UniProtKB-KW"/>
</dbReference>
<dbReference type="GO" id="GO:0090729">
    <property type="term" value="F:toxin activity"/>
    <property type="evidence" value="ECO:0007669"/>
    <property type="project" value="UniProtKB-KW"/>
</dbReference>
<dbReference type="NCBIfam" id="NF011909">
    <property type="entry name" value="PRK15382.1"/>
    <property type="match status" value="1"/>
</dbReference>
<dbReference type="Pfam" id="PF24688">
    <property type="entry name" value="SseK_NleB"/>
    <property type="match status" value="1"/>
</dbReference>
<accession>B7UNX3</accession>